<reference key="1">
    <citation type="journal article" date="2005" name="Proc. Natl. Acad. Sci. U.S.A.">
        <title>Whole genome sequence of Staphylococcus saprophyticus reveals the pathogenesis of uncomplicated urinary tract infection.</title>
        <authorList>
            <person name="Kuroda M."/>
            <person name="Yamashita A."/>
            <person name="Hirakawa H."/>
            <person name="Kumano M."/>
            <person name="Morikawa K."/>
            <person name="Higashide M."/>
            <person name="Maruyama A."/>
            <person name="Inose Y."/>
            <person name="Matoba K."/>
            <person name="Toh H."/>
            <person name="Kuhara S."/>
            <person name="Hattori M."/>
            <person name="Ohta T."/>
        </authorList>
    </citation>
    <scope>NUCLEOTIDE SEQUENCE [LARGE SCALE GENOMIC DNA]</scope>
    <source>
        <strain>ATCC 15305 / DSM 20229 / NCIMB 8711 / NCTC 7292 / S-41</strain>
    </source>
</reference>
<feature type="chain" id="PRO_0000273861" description="Large ribosomal subunit protein uL30">
    <location>
        <begin position="1"/>
        <end position="59"/>
    </location>
</feature>
<accession>Q49ZF0</accession>
<evidence type="ECO:0000255" key="1">
    <source>
        <dbReference type="HAMAP-Rule" id="MF_01371"/>
    </source>
</evidence>
<evidence type="ECO:0000305" key="2"/>
<sequence length="59" mass="6513">MAKLQITLTRSVIGRPETQRKTVEALGLKKTNSSVVVEDNPAIRGQINKVSHLVTVEEK</sequence>
<gene>
    <name evidence="1" type="primary">rpmD</name>
    <name type="ordered locus">SSP0681</name>
</gene>
<dbReference type="EMBL" id="AP008934">
    <property type="protein sequence ID" value="BAE17826.1"/>
    <property type="molecule type" value="Genomic_DNA"/>
</dbReference>
<dbReference type="RefSeq" id="WP_002482630.1">
    <property type="nucleotide sequence ID" value="NZ_MTGA01000036.1"/>
</dbReference>
<dbReference type="SMR" id="Q49ZF0"/>
<dbReference type="GeneID" id="97287066"/>
<dbReference type="KEGG" id="ssp:SSP0681"/>
<dbReference type="eggNOG" id="COG1841">
    <property type="taxonomic scope" value="Bacteria"/>
</dbReference>
<dbReference type="HOGENOM" id="CLU_131047_2_1_9"/>
<dbReference type="OrthoDB" id="9812790at2"/>
<dbReference type="Proteomes" id="UP000006371">
    <property type="component" value="Chromosome"/>
</dbReference>
<dbReference type="GO" id="GO:0022625">
    <property type="term" value="C:cytosolic large ribosomal subunit"/>
    <property type="evidence" value="ECO:0007669"/>
    <property type="project" value="TreeGrafter"/>
</dbReference>
<dbReference type="GO" id="GO:0003735">
    <property type="term" value="F:structural constituent of ribosome"/>
    <property type="evidence" value="ECO:0007669"/>
    <property type="project" value="InterPro"/>
</dbReference>
<dbReference type="GO" id="GO:0006412">
    <property type="term" value="P:translation"/>
    <property type="evidence" value="ECO:0007669"/>
    <property type="project" value="UniProtKB-UniRule"/>
</dbReference>
<dbReference type="CDD" id="cd01658">
    <property type="entry name" value="Ribosomal_L30"/>
    <property type="match status" value="1"/>
</dbReference>
<dbReference type="FunFam" id="3.30.1390.20:FF:000001">
    <property type="entry name" value="50S ribosomal protein L30"/>
    <property type="match status" value="1"/>
</dbReference>
<dbReference type="Gene3D" id="3.30.1390.20">
    <property type="entry name" value="Ribosomal protein L30, ferredoxin-like fold domain"/>
    <property type="match status" value="1"/>
</dbReference>
<dbReference type="HAMAP" id="MF_01371_B">
    <property type="entry name" value="Ribosomal_uL30_B"/>
    <property type="match status" value="1"/>
</dbReference>
<dbReference type="InterPro" id="IPR036919">
    <property type="entry name" value="Ribo_uL30_ferredoxin-like_sf"/>
</dbReference>
<dbReference type="InterPro" id="IPR005996">
    <property type="entry name" value="Ribosomal_uL30_bac-type"/>
</dbReference>
<dbReference type="InterPro" id="IPR016082">
    <property type="entry name" value="Ribosomal_uL30_ferredoxin-like"/>
</dbReference>
<dbReference type="NCBIfam" id="TIGR01308">
    <property type="entry name" value="rpmD_bact"/>
    <property type="match status" value="1"/>
</dbReference>
<dbReference type="PANTHER" id="PTHR15892:SF2">
    <property type="entry name" value="LARGE RIBOSOMAL SUBUNIT PROTEIN UL30M"/>
    <property type="match status" value="1"/>
</dbReference>
<dbReference type="PANTHER" id="PTHR15892">
    <property type="entry name" value="MITOCHONDRIAL RIBOSOMAL PROTEIN L30"/>
    <property type="match status" value="1"/>
</dbReference>
<dbReference type="Pfam" id="PF00327">
    <property type="entry name" value="Ribosomal_L30"/>
    <property type="match status" value="1"/>
</dbReference>
<dbReference type="PIRSF" id="PIRSF002211">
    <property type="entry name" value="Ribosomal_L30_bac-type"/>
    <property type="match status" value="1"/>
</dbReference>
<dbReference type="SUPFAM" id="SSF55129">
    <property type="entry name" value="Ribosomal protein L30p/L7e"/>
    <property type="match status" value="1"/>
</dbReference>
<keyword id="KW-1185">Reference proteome</keyword>
<keyword id="KW-0687">Ribonucleoprotein</keyword>
<keyword id="KW-0689">Ribosomal protein</keyword>
<organism>
    <name type="scientific">Staphylococcus saprophyticus subsp. saprophyticus (strain ATCC 15305 / DSM 20229 / NCIMB 8711 / NCTC 7292 / S-41)</name>
    <dbReference type="NCBI Taxonomy" id="342451"/>
    <lineage>
        <taxon>Bacteria</taxon>
        <taxon>Bacillati</taxon>
        <taxon>Bacillota</taxon>
        <taxon>Bacilli</taxon>
        <taxon>Bacillales</taxon>
        <taxon>Staphylococcaceae</taxon>
        <taxon>Staphylococcus</taxon>
    </lineage>
</organism>
<proteinExistence type="inferred from homology"/>
<name>RL30_STAS1</name>
<comment type="subunit">
    <text evidence="1">Part of the 50S ribosomal subunit.</text>
</comment>
<comment type="similarity">
    <text evidence="1">Belongs to the universal ribosomal protein uL30 family.</text>
</comment>
<protein>
    <recommendedName>
        <fullName evidence="1">Large ribosomal subunit protein uL30</fullName>
    </recommendedName>
    <alternativeName>
        <fullName evidence="2">50S ribosomal protein L30</fullName>
    </alternativeName>
</protein>